<comment type="function">
    <text evidence="1">Catalyzes the NADPH-dependent reduction of glutamyl-tRNA(Glu) to glutamate 1-semialdehyde (GSA).</text>
</comment>
<comment type="catalytic activity">
    <reaction evidence="1">
        <text>(S)-4-amino-5-oxopentanoate + tRNA(Glu) + NADP(+) = L-glutamyl-tRNA(Glu) + NADPH + H(+)</text>
        <dbReference type="Rhea" id="RHEA:12344"/>
        <dbReference type="Rhea" id="RHEA-COMP:9663"/>
        <dbReference type="Rhea" id="RHEA-COMP:9680"/>
        <dbReference type="ChEBI" id="CHEBI:15378"/>
        <dbReference type="ChEBI" id="CHEBI:57501"/>
        <dbReference type="ChEBI" id="CHEBI:57783"/>
        <dbReference type="ChEBI" id="CHEBI:58349"/>
        <dbReference type="ChEBI" id="CHEBI:78442"/>
        <dbReference type="ChEBI" id="CHEBI:78520"/>
        <dbReference type="EC" id="1.2.1.70"/>
    </reaction>
</comment>
<comment type="pathway">
    <text evidence="1">Porphyrin-containing compound metabolism; protoporphyrin-IX biosynthesis; 5-aminolevulinate from L-glutamyl-tRNA(Glu): step 1/2.</text>
</comment>
<comment type="subunit">
    <text evidence="1">Homodimer.</text>
</comment>
<comment type="domain">
    <text evidence="1">Possesses an unusual extended V-shaped dimeric structure with each monomer consisting of three distinct domains arranged along a curved 'spinal' alpha-helix. The N-terminal catalytic domain specifically recognizes the glutamate moiety of the substrate. The second domain is the NADPH-binding domain, and the third C-terminal domain is responsible for dimerization.</text>
</comment>
<comment type="miscellaneous">
    <text evidence="1">During catalysis, the active site Cys acts as a nucleophile attacking the alpha-carbonyl group of tRNA-bound glutamate with the formation of a thioester intermediate between enzyme and glutamate, and the concomitant release of tRNA(Glu). The thioester intermediate is finally reduced by direct hydride transfer from NADPH, to form the product GSA.</text>
</comment>
<comment type="similarity">
    <text evidence="1">Belongs to the glutamyl-tRNA reductase family.</text>
</comment>
<reference key="1">
    <citation type="journal article" date="2001" name="Proc. Natl. Acad. Sci. U.S.A.">
        <title>Genome sequence of an industrial microorganism Streptomyces avermitilis: deducing the ability of producing secondary metabolites.</title>
        <authorList>
            <person name="Omura S."/>
            <person name="Ikeda H."/>
            <person name="Ishikawa J."/>
            <person name="Hanamoto A."/>
            <person name="Takahashi C."/>
            <person name="Shinose M."/>
            <person name="Takahashi Y."/>
            <person name="Horikawa H."/>
            <person name="Nakazawa H."/>
            <person name="Osonoe T."/>
            <person name="Kikuchi H."/>
            <person name="Shiba T."/>
            <person name="Sakaki Y."/>
            <person name="Hattori M."/>
        </authorList>
    </citation>
    <scope>NUCLEOTIDE SEQUENCE [LARGE SCALE GENOMIC DNA]</scope>
    <source>
        <strain>ATCC 31267 / DSM 46492 / JCM 5070 / NBRC 14893 / NCIMB 12804 / NRRL 8165 / MA-4680</strain>
    </source>
</reference>
<reference key="2">
    <citation type="journal article" date="2003" name="Nat. Biotechnol.">
        <title>Complete genome sequence and comparative analysis of the industrial microorganism Streptomyces avermitilis.</title>
        <authorList>
            <person name="Ikeda H."/>
            <person name="Ishikawa J."/>
            <person name="Hanamoto A."/>
            <person name="Shinose M."/>
            <person name="Kikuchi H."/>
            <person name="Shiba T."/>
            <person name="Sakaki Y."/>
            <person name="Hattori M."/>
            <person name="Omura S."/>
        </authorList>
    </citation>
    <scope>NUCLEOTIDE SEQUENCE [LARGE SCALE GENOMIC DNA]</scope>
    <source>
        <strain>ATCC 31267 / DSM 46492 / JCM 5070 / NBRC 14893 / NCIMB 12804 / NRRL 8165 / MA-4680</strain>
    </source>
</reference>
<gene>
    <name evidence="1" type="primary">hemA</name>
    <name type="ordered locus">SAV_4739</name>
</gene>
<sequence length="569" mass="59320">MSLLVVGLSHRSAPVSVLERATLTADAQVKLLQDTVAAEPATEAAVLATCNRIELYADVDKFHAGVAELSTLLAQHSGVGLEELTPYLYVHYEDRAVHHLFSVACGLDSMVVGEGQILGQIKDALATAQELHTAGRLLNDLFQQALRTGKRAHSETGIDRAGQSLVTFGLEQLSAGTAVEAWAKGKRALVIGAGSMSSLAAATLARAGVAEVVIANRTPDRAERLAQILTEGDDTDVLARAVPMDAVPAELTRADVAVSCTGATGLVLTAEAVAAAVEGRTGTPVAVREETPASAAGGLAPAGTDEGCPLDLSAVQGATGFSVMGEAAVAGMDAATLEQHAAWVDRGTVDRRDSRRTPEVEAELITALAATVAAGGRLPERRRPEPVVEAPRPAPALALLDLAMPRDIDAAVHRLLGVRLVDIESLAEASADAPMAADVDLVRRIVADEVAAFGAAQRAAHITPTVVALRTMAADVVANEIARLDGRLPGLDEKQRGEITQTVRRVVDKLLHAPTVRVKQLAAEPGGAGYADALRTLFDLDPETVAAVSRADDRDTSDSTENAKNRGRE</sequence>
<keyword id="KW-0521">NADP</keyword>
<keyword id="KW-0560">Oxidoreductase</keyword>
<keyword id="KW-0627">Porphyrin biosynthesis</keyword>
<keyword id="KW-1185">Reference proteome</keyword>
<protein>
    <recommendedName>
        <fullName evidence="1">Glutamyl-tRNA reductase</fullName>
        <shortName evidence="1">GluTR</shortName>
        <ecNumber evidence="1">1.2.1.70</ecNumber>
    </recommendedName>
</protein>
<dbReference type="EC" id="1.2.1.70" evidence="1"/>
<dbReference type="EMBL" id="BA000030">
    <property type="protein sequence ID" value="BAC72451.1"/>
    <property type="molecule type" value="Genomic_DNA"/>
</dbReference>
<dbReference type="RefSeq" id="WP_010986162.1">
    <property type="nucleotide sequence ID" value="NZ_JZJK01000077.1"/>
</dbReference>
<dbReference type="SMR" id="Q82E77"/>
<dbReference type="GeneID" id="41541823"/>
<dbReference type="KEGG" id="sma:SAVERM_4739"/>
<dbReference type="eggNOG" id="COG0373">
    <property type="taxonomic scope" value="Bacteria"/>
</dbReference>
<dbReference type="HOGENOM" id="CLU_035113_4_0_11"/>
<dbReference type="OrthoDB" id="110209at2"/>
<dbReference type="UniPathway" id="UPA00251">
    <property type="reaction ID" value="UER00316"/>
</dbReference>
<dbReference type="Proteomes" id="UP000000428">
    <property type="component" value="Chromosome"/>
</dbReference>
<dbReference type="GO" id="GO:0008883">
    <property type="term" value="F:glutamyl-tRNA reductase activity"/>
    <property type="evidence" value="ECO:0007669"/>
    <property type="project" value="UniProtKB-UniRule"/>
</dbReference>
<dbReference type="GO" id="GO:0050661">
    <property type="term" value="F:NADP binding"/>
    <property type="evidence" value="ECO:0007669"/>
    <property type="project" value="InterPro"/>
</dbReference>
<dbReference type="GO" id="GO:0019353">
    <property type="term" value="P:protoporphyrinogen IX biosynthetic process from glutamate"/>
    <property type="evidence" value="ECO:0007669"/>
    <property type="project" value="TreeGrafter"/>
</dbReference>
<dbReference type="CDD" id="cd05213">
    <property type="entry name" value="NAD_bind_Glutamyl_tRNA_reduct"/>
    <property type="match status" value="1"/>
</dbReference>
<dbReference type="FunFam" id="3.30.460.30:FF:000001">
    <property type="entry name" value="Glutamyl-tRNA reductase"/>
    <property type="match status" value="1"/>
</dbReference>
<dbReference type="Gene3D" id="3.30.460.30">
    <property type="entry name" value="Glutamyl-tRNA reductase, N-terminal domain"/>
    <property type="match status" value="1"/>
</dbReference>
<dbReference type="Gene3D" id="3.40.50.720">
    <property type="entry name" value="NAD(P)-binding Rossmann-like Domain"/>
    <property type="match status" value="2"/>
</dbReference>
<dbReference type="HAMAP" id="MF_00087">
    <property type="entry name" value="Glu_tRNA_reductase"/>
    <property type="match status" value="1"/>
</dbReference>
<dbReference type="InterPro" id="IPR000343">
    <property type="entry name" value="4pyrrol_synth_GluRdtase"/>
</dbReference>
<dbReference type="InterPro" id="IPR015896">
    <property type="entry name" value="4pyrrol_synth_GluRdtase_dimer"/>
</dbReference>
<dbReference type="InterPro" id="IPR015895">
    <property type="entry name" value="4pyrrol_synth_GluRdtase_N"/>
</dbReference>
<dbReference type="InterPro" id="IPR018214">
    <property type="entry name" value="GluRdtase_CS"/>
</dbReference>
<dbReference type="InterPro" id="IPR036453">
    <property type="entry name" value="GluRdtase_dimer_dom_sf"/>
</dbReference>
<dbReference type="InterPro" id="IPR036343">
    <property type="entry name" value="GluRdtase_N_sf"/>
</dbReference>
<dbReference type="InterPro" id="IPR036291">
    <property type="entry name" value="NAD(P)-bd_dom_sf"/>
</dbReference>
<dbReference type="InterPro" id="IPR006151">
    <property type="entry name" value="Shikm_DH/Glu-tRNA_Rdtase"/>
</dbReference>
<dbReference type="NCBIfam" id="TIGR01035">
    <property type="entry name" value="hemA"/>
    <property type="match status" value="1"/>
</dbReference>
<dbReference type="NCBIfam" id="NF000744">
    <property type="entry name" value="PRK00045.1-3"/>
    <property type="match status" value="1"/>
</dbReference>
<dbReference type="PANTHER" id="PTHR43013">
    <property type="entry name" value="GLUTAMYL-TRNA REDUCTASE"/>
    <property type="match status" value="1"/>
</dbReference>
<dbReference type="PANTHER" id="PTHR43013:SF1">
    <property type="entry name" value="GLUTAMYL-TRNA REDUCTASE"/>
    <property type="match status" value="1"/>
</dbReference>
<dbReference type="Pfam" id="PF00745">
    <property type="entry name" value="GlutR_dimer"/>
    <property type="match status" value="1"/>
</dbReference>
<dbReference type="Pfam" id="PF05201">
    <property type="entry name" value="GlutR_N"/>
    <property type="match status" value="1"/>
</dbReference>
<dbReference type="Pfam" id="PF01488">
    <property type="entry name" value="Shikimate_DH"/>
    <property type="match status" value="1"/>
</dbReference>
<dbReference type="SUPFAM" id="SSF69742">
    <property type="entry name" value="Glutamyl tRNA-reductase catalytic, N-terminal domain"/>
    <property type="match status" value="1"/>
</dbReference>
<dbReference type="SUPFAM" id="SSF69075">
    <property type="entry name" value="Glutamyl tRNA-reductase dimerization domain"/>
    <property type="match status" value="1"/>
</dbReference>
<dbReference type="SUPFAM" id="SSF51735">
    <property type="entry name" value="NAD(P)-binding Rossmann-fold domains"/>
    <property type="match status" value="1"/>
</dbReference>
<dbReference type="PROSITE" id="PS00747">
    <property type="entry name" value="GLUTR"/>
    <property type="match status" value="1"/>
</dbReference>
<accession>Q82E77</accession>
<evidence type="ECO:0000255" key="1">
    <source>
        <dbReference type="HAMAP-Rule" id="MF_00087"/>
    </source>
</evidence>
<evidence type="ECO:0000256" key="2">
    <source>
        <dbReference type="SAM" id="MobiDB-lite"/>
    </source>
</evidence>
<name>HEM1_STRAW</name>
<feature type="chain" id="PRO_0000114075" description="Glutamyl-tRNA reductase">
    <location>
        <begin position="1"/>
        <end position="569"/>
    </location>
</feature>
<feature type="region of interest" description="Insert">
    <location>
        <begin position="284"/>
        <end position="397"/>
    </location>
</feature>
<feature type="region of interest" description="Disordered" evidence="2">
    <location>
        <begin position="546"/>
        <end position="569"/>
    </location>
</feature>
<feature type="compositionally biased region" description="Basic and acidic residues" evidence="2">
    <location>
        <begin position="550"/>
        <end position="569"/>
    </location>
</feature>
<feature type="active site" description="Nucleophile" evidence="1">
    <location>
        <position position="50"/>
    </location>
</feature>
<feature type="binding site" evidence="1">
    <location>
        <begin position="49"/>
        <end position="52"/>
    </location>
    <ligand>
        <name>substrate</name>
    </ligand>
</feature>
<feature type="binding site" evidence="1">
    <location>
        <position position="109"/>
    </location>
    <ligand>
        <name>substrate</name>
    </ligand>
</feature>
<feature type="binding site" evidence="1">
    <location>
        <begin position="114"/>
        <end position="116"/>
    </location>
    <ligand>
        <name>substrate</name>
    </ligand>
</feature>
<feature type="binding site" evidence="1">
    <location>
        <position position="120"/>
    </location>
    <ligand>
        <name>substrate</name>
    </ligand>
</feature>
<feature type="binding site" evidence="1">
    <location>
        <begin position="192"/>
        <end position="197"/>
    </location>
    <ligand>
        <name>NADP(+)</name>
        <dbReference type="ChEBI" id="CHEBI:58349"/>
    </ligand>
</feature>
<feature type="site" description="Important for activity" evidence="1">
    <location>
        <position position="99"/>
    </location>
</feature>
<proteinExistence type="inferred from homology"/>
<organism>
    <name type="scientific">Streptomyces avermitilis (strain ATCC 31267 / DSM 46492 / JCM 5070 / NBRC 14893 / NCIMB 12804 / NRRL 8165 / MA-4680)</name>
    <dbReference type="NCBI Taxonomy" id="227882"/>
    <lineage>
        <taxon>Bacteria</taxon>
        <taxon>Bacillati</taxon>
        <taxon>Actinomycetota</taxon>
        <taxon>Actinomycetes</taxon>
        <taxon>Kitasatosporales</taxon>
        <taxon>Streptomycetaceae</taxon>
        <taxon>Streptomyces</taxon>
    </lineage>
</organism>